<accession>Q9GLZ5</accession>
<gene>
    <name type="primary">STRIP1</name>
    <name type="synonym">FAM40A</name>
    <name type="ORF">QnpA-18494</name>
</gene>
<proteinExistence type="evidence at transcript level"/>
<comment type="function">
    <text evidence="2">Plays a role in the regulation of cell morphology and cytoskeletal organization. Required in the cortical actin filament dynamics and cell shape. Part of the striatin-interacting phosphatase and kinase (STRIPAK) complexes. STRIPAK complexes have critical roles in protein (de)phosphorylation and are regulators of multiple signaling pathways including Hippo, MAPK, nuclear receptor and cytoskeleton remodeling. Different types of STRIPAK complexes are involved in a variety of biological processes such as cell growth, differentiation, apoptosis, metabolism and immune regulation.</text>
</comment>
<comment type="subunit">
    <text evidence="2 3">Part of the core of STRIPAK complexes composed of PP2A catalytic and scaffolding subunits, the striatins (PP2A regulatory subunits), the striatin-associated proteins MOB4, STRIP1 and STRIP2, PDCD10 and members of the STE20 kinases, such as STK24 and STK26. The STRIPAK complex can be extended by adapter proteins such as SLMAP:SIKE1, CTTNBP2 or CTTNBP2NL. Interacts with CDC42BPB. Interacts with CTTNBP2NL.</text>
</comment>
<comment type="subcellular location">
    <subcellularLocation>
        <location evidence="1">Cytoplasm</location>
    </subcellularLocation>
    <text evidence="1">Enriched on the plasma membrane.</text>
</comment>
<comment type="similarity">
    <text evidence="5">Belongs to the STRIP family.</text>
</comment>
<organism>
    <name type="scientific">Macaca fascicularis</name>
    <name type="common">Crab-eating macaque</name>
    <name type="synonym">Cynomolgus monkey</name>
    <dbReference type="NCBI Taxonomy" id="9541"/>
    <lineage>
        <taxon>Eukaryota</taxon>
        <taxon>Metazoa</taxon>
        <taxon>Chordata</taxon>
        <taxon>Craniata</taxon>
        <taxon>Vertebrata</taxon>
        <taxon>Euteleostomi</taxon>
        <taxon>Mammalia</taxon>
        <taxon>Eutheria</taxon>
        <taxon>Euarchontoglires</taxon>
        <taxon>Primates</taxon>
        <taxon>Haplorrhini</taxon>
        <taxon>Catarrhini</taxon>
        <taxon>Cercopithecidae</taxon>
        <taxon>Cercopithecinae</taxon>
        <taxon>Macaca</taxon>
    </lineage>
</organism>
<dbReference type="EMBL" id="AB050515">
    <property type="protein sequence ID" value="BAB17283.1"/>
    <property type="molecule type" value="mRNA"/>
</dbReference>
<dbReference type="RefSeq" id="NP_001306531.1">
    <property type="nucleotide sequence ID" value="NM_001319602.1"/>
</dbReference>
<dbReference type="RefSeq" id="XP_045221610.1">
    <property type="nucleotide sequence ID" value="XM_045365675.2"/>
</dbReference>
<dbReference type="SMR" id="Q9GLZ5"/>
<dbReference type="STRING" id="9541.ENSMFAP00000017559"/>
<dbReference type="GeneID" id="102140038"/>
<dbReference type="eggNOG" id="KOG3680">
    <property type="taxonomic scope" value="Eukaryota"/>
</dbReference>
<dbReference type="Proteomes" id="UP000233100">
    <property type="component" value="Unplaced"/>
</dbReference>
<dbReference type="GO" id="GO:0005829">
    <property type="term" value="C:cytosol"/>
    <property type="evidence" value="ECO:0007669"/>
    <property type="project" value="TreeGrafter"/>
</dbReference>
<dbReference type="GO" id="GO:0090443">
    <property type="term" value="C:FAR/SIN/STRIPAK complex"/>
    <property type="evidence" value="ECO:0000250"/>
    <property type="project" value="UniProtKB"/>
</dbReference>
<dbReference type="GO" id="GO:0030674">
    <property type="term" value="F:protein-macromolecule adaptor activity"/>
    <property type="evidence" value="ECO:0000250"/>
    <property type="project" value="UniProtKB"/>
</dbReference>
<dbReference type="GO" id="GO:0030866">
    <property type="term" value="P:cortical actin cytoskeleton organization"/>
    <property type="evidence" value="ECO:0000250"/>
    <property type="project" value="UniProtKB"/>
</dbReference>
<dbReference type="GO" id="GO:0035331">
    <property type="term" value="P:negative regulation of hippo signaling"/>
    <property type="evidence" value="ECO:0000250"/>
    <property type="project" value="UniProtKB"/>
</dbReference>
<dbReference type="GO" id="GO:0022604">
    <property type="term" value="P:regulation of cell morphogenesis"/>
    <property type="evidence" value="ECO:0000250"/>
    <property type="project" value="UniProtKB"/>
</dbReference>
<dbReference type="InterPro" id="IPR040185">
    <property type="entry name" value="Far11/STRP"/>
</dbReference>
<dbReference type="InterPro" id="IPR021819">
    <property type="entry name" value="Far11/STRP_C"/>
</dbReference>
<dbReference type="InterPro" id="IPR012486">
    <property type="entry name" value="Far11/STRP_N"/>
</dbReference>
<dbReference type="PANTHER" id="PTHR13239">
    <property type="entry name" value="PROTEIN REQUIRED FOR HYPHAL ANASTOMOSIS HAM-2"/>
    <property type="match status" value="1"/>
</dbReference>
<dbReference type="PANTHER" id="PTHR13239:SF7">
    <property type="entry name" value="STRIATIN-INTERACTING PROTEIN 1"/>
    <property type="match status" value="1"/>
</dbReference>
<dbReference type="Pfam" id="PF11882">
    <property type="entry name" value="DUF3402"/>
    <property type="match status" value="2"/>
</dbReference>
<dbReference type="Pfam" id="PF07923">
    <property type="entry name" value="N1221"/>
    <property type="match status" value="1"/>
</dbReference>
<dbReference type="SMART" id="SM01293">
    <property type="entry name" value="DUF3402"/>
    <property type="match status" value="1"/>
</dbReference>
<dbReference type="SMART" id="SM01292">
    <property type="entry name" value="N1221"/>
    <property type="match status" value="1"/>
</dbReference>
<name>STRP1_MACFA</name>
<keyword id="KW-0007">Acetylation</keyword>
<keyword id="KW-0963">Cytoplasm</keyword>
<keyword id="KW-0597">Phosphoprotein</keyword>
<keyword id="KW-1185">Reference proteome</keyword>
<evidence type="ECO:0000250" key="1"/>
<evidence type="ECO:0000250" key="2">
    <source>
        <dbReference type="UniProtKB" id="Q5VSL9"/>
    </source>
</evidence>
<evidence type="ECO:0000250" key="3">
    <source>
        <dbReference type="UniProtKB" id="Q8C079"/>
    </source>
</evidence>
<evidence type="ECO:0000256" key="4">
    <source>
        <dbReference type="SAM" id="MobiDB-lite"/>
    </source>
</evidence>
<evidence type="ECO:0000305" key="5"/>
<protein>
    <recommendedName>
        <fullName>Striatin-interacting protein 1</fullName>
    </recommendedName>
    <alternativeName>
        <fullName>Protein FAM40A</fullName>
    </alternativeName>
</protein>
<feature type="chain" id="PRO_0000187018" description="Striatin-interacting protein 1">
    <location>
        <begin position="1"/>
        <end position="837"/>
    </location>
</feature>
<feature type="region of interest" description="Disordered" evidence="4">
    <location>
        <begin position="1"/>
        <end position="66"/>
    </location>
</feature>
<feature type="region of interest" description="Disordered" evidence="4">
    <location>
        <begin position="333"/>
        <end position="423"/>
    </location>
</feature>
<feature type="region of interest" description="Required for STRIPAK core complex formation" evidence="2">
    <location>
        <begin position="796"/>
        <end position="837"/>
    </location>
</feature>
<feature type="compositionally biased region" description="Pro residues" evidence="4">
    <location>
        <begin position="18"/>
        <end position="35"/>
    </location>
</feature>
<feature type="compositionally biased region" description="Basic and acidic residues" evidence="4">
    <location>
        <begin position="47"/>
        <end position="60"/>
    </location>
</feature>
<feature type="compositionally biased region" description="Basic and acidic residues" evidence="4">
    <location>
        <begin position="356"/>
        <end position="377"/>
    </location>
</feature>
<feature type="compositionally biased region" description="Acidic residues" evidence="4">
    <location>
        <begin position="378"/>
        <end position="391"/>
    </location>
</feature>
<feature type="modified residue" description="N-acetylmethionine" evidence="2">
    <location>
        <position position="1"/>
    </location>
</feature>
<feature type="modified residue" description="Phosphoserine" evidence="2">
    <location>
        <position position="59"/>
    </location>
</feature>
<feature type="modified residue" description="Phosphoserine" evidence="2">
    <location>
        <position position="335"/>
    </location>
</feature>
<feature type="modified residue" description="Phosphoserine" evidence="3">
    <location>
        <position position="339"/>
    </location>
</feature>
<feature type="modified residue" description="Phosphoserine" evidence="2">
    <location>
        <position position="788"/>
    </location>
</feature>
<reference key="1">
    <citation type="submission" date="2000-10" db="EMBL/GenBank/DDBJ databases">
        <title>Isolation of full-length cDNA clones from macaque brain cDNA libraries.</title>
        <authorList>
            <person name="Osada N."/>
            <person name="Hida M."/>
            <person name="Kusuda J."/>
            <person name="Tanuma R."/>
            <person name="Iseki K."/>
            <person name="Hirai M."/>
            <person name="Terao K."/>
            <person name="Suzuki Y."/>
            <person name="Sugano S."/>
            <person name="Hashimoto K."/>
        </authorList>
    </citation>
    <scope>NUCLEOTIDE SEQUENCE [LARGE SCALE MRNA]</scope>
    <source>
        <tissue>Parietal cortex</tissue>
    </source>
</reference>
<sequence length="837" mass="95537">MEPAAGGPGPLIVNNKQPQPPPPPPPATAQPPPGAPRAGAGLLPGGKAREFNRNQRKDSEGYSESPDLEFEYADTDKWAAELSELYSYTEGPEFLMNRKCFEEDFRIHVTDKKWTELDTNQHRTHAMRLLDGLEVTAREKRLKVARAILYVAQGTFGECSSEAEVQSWMRYNIFLLLEVGTFNALVELLNMEIDNSAACSSAVRKPAISLADSTDLRVLLNIMYLIVETVHQECEGDKAEWRTMRQTFRAELGSPLYNSEPFAIMLFGMVTKFCSGHAPHFPMKKVLLLLWKTVLCTLGGFEELQSMKAEKRSILGLPPLPEDSIKVIRNMRAASPPASASDLIEQQQKRGRREHKALIKQDNLDAFNERDPYKADDSREEEEENDDDNSLEGETFPLERDEVMPPPLQHPQTDRLTCPKGLPWAPKVREKDIEMFLESSRSKFIGYTLGSDTNTVVGLPRPIHESIKTLKQHKYTSIAEVQAQMEEEYLRSPLSGGEEEVEQVPAETLYQGLLPSLPQYMIALLKILLAAAPTSKAKTDSINILADVLPEEMPTTVLQSMKLGVDVNRHKEVIVKAISAVLLLLLKHFKLNHVYQFEYMAQHLVFANCIPLILKFFNQNIMSYITAKNSISVLDYPHCVVHELPELTAESLEAGDSNQFCWRNLFSCINLLRILNKLTKWKHSRTMMLVVFKSAPILKRALKVKQAMMQLYVLKLLKVQTKYLGRQWRKSNMKTMSAIYQKVRHRLNDDWAYGNDLDARPWDFQAEECALRANIERFNARRYDRAHSNPDFLPVDNCLQSVLGQRVDLPEDFQMNYDLWLEREVFSKPISWEELLQ</sequence>